<protein>
    <recommendedName>
        <fullName>Putative uncharacterized protein ycf15</fullName>
    </recommendedName>
    <alternativeName>
        <fullName>ORF 99</fullName>
    </alternativeName>
</protein>
<comment type="subcellular location">
    <subcellularLocation>
        <location>Plastid</location>
        <location>Chloroplast</location>
    </subcellularLocation>
</comment>
<comment type="similarity">
    <text evidence="1">Belongs to the ycf15 family.</text>
</comment>
<comment type="caution">
    <text evidence="1">Could be the product of a pseudogene.</text>
</comment>
<keyword id="KW-0150">Chloroplast</keyword>
<keyword id="KW-0934">Plastid</keyword>
<keyword id="KW-1185">Reference proteome</keyword>
<gene>
    <name type="primary">ycf15-A</name>
</gene>
<gene>
    <name type="primary">ycf15-B</name>
</gene>
<name>YCF15_MAIZE</name>
<accession>P46666</accession>
<sequence length="99" mass="11572">MLIVLFRSKDIRGGRFVRPILIFRTKRSWILFRIGPERRREAEMPTDLCLFSNSPDPIVPVFGTSSAKVTEWVSHQSNPFDKSGVILDIIFYIYRNIIE</sequence>
<geneLocation type="chloroplast"/>
<evidence type="ECO:0000305" key="1"/>
<dbReference type="EMBL" id="X86563">
    <property type="protein sequence ID" value="CAA60336.1"/>
    <property type="molecule type" value="Genomic_DNA"/>
</dbReference>
<dbReference type="EMBL" id="X86563">
    <property type="protein sequence ID" value="CAA60365.1"/>
    <property type="molecule type" value="Genomic_DNA"/>
</dbReference>
<dbReference type="PIR" id="S58633">
    <property type="entry name" value="S58633"/>
</dbReference>
<dbReference type="RefSeq" id="NP_043074.1">
    <property type="nucleotide sequence ID" value="NC_001666.2"/>
</dbReference>
<dbReference type="RefSeq" id="NP_043104.1">
    <property type="nucleotide sequence ID" value="NC_001666.2"/>
</dbReference>
<dbReference type="STRING" id="4577.P46666"/>
<dbReference type="PaxDb" id="4577-GRMZM5G831550_P01"/>
<dbReference type="KEGG" id="zma:1466372"/>
<dbReference type="KEGG" id="zma:1466385"/>
<dbReference type="MaizeGDB" id="121982"/>
<dbReference type="eggNOG" id="ENOG502SDZ7">
    <property type="taxonomic scope" value="Eukaryota"/>
</dbReference>
<dbReference type="HOGENOM" id="CLU_158228_0_0_1"/>
<dbReference type="InParanoid" id="P46666"/>
<dbReference type="OrthoDB" id="584055at2759"/>
<dbReference type="Proteomes" id="UP000007305">
    <property type="component" value="Chloroplast"/>
</dbReference>
<dbReference type="GO" id="GO:0009507">
    <property type="term" value="C:chloroplast"/>
    <property type="evidence" value="ECO:0007669"/>
    <property type="project" value="UniProtKB-SubCell"/>
</dbReference>
<dbReference type="InterPro" id="IPR019645">
    <property type="entry name" value="Uncharacterised_Ycf15"/>
</dbReference>
<dbReference type="Pfam" id="PF10705">
    <property type="entry name" value="Ycf15"/>
    <property type="match status" value="1"/>
</dbReference>
<organism>
    <name type="scientific">Zea mays</name>
    <name type="common">Maize</name>
    <dbReference type="NCBI Taxonomy" id="4577"/>
    <lineage>
        <taxon>Eukaryota</taxon>
        <taxon>Viridiplantae</taxon>
        <taxon>Streptophyta</taxon>
        <taxon>Embryophyta</taxon>
        <taxon>Tracheophyta</taxon>
        <taxon>Spermatophyta</taxon>
        <taxon>Magnoliopsida</taxon>
        <taxon>Liliopsida</taxon>
        <taxon>Poales</taxon>
        <taxon>Poaceae</taxon>
        <taxon>PACMAD clade</taxon>
        <taxon>Panicoideae</taxon>
        <taxon>Andropogonodae</taxon>
        <taxon>Andropogoneae</taxon>
        <taxon>Tripsacinae</taxon>
        <taxon>Zea</taxon>
    </lineage>
</organism>
<feature type="chain" id="PRO_0000217310" description="Putative uncharacterized protein ycf15">
    <location>
        <begin position="1"/>
        <end position="99"/>
    </location>
</feature>
<proteinExistence type="uncertain"/>
<reference key="1">
    <citation type="journal article" date="1995" name="J. Mol. Biol.">
        <title>Complete sequence of the maize chloroplast genome: gene content, hotspots of divergence and fine tuning of genetic information by transcript editing.</title>
        <authorList>
            <person name="Maier R.M."/>
            <person name="Neckermann K."/>
            <person name="Igloi G.L."/>
            <person name="Koessel H."/>
        </authorList>
    </citation>
    <scope>NUCLEOTIDE SEQUENCE [LARGE SCALE GENOMIC DNA]</scope>
    <source>
        <strain>cv. B73</strain>
    </source>
</reference>